<dbReference type="EC" id="1.11.1.28" evidence="2"/>
<dbReference type="EMBL" id="CU234118">
    <property type="protein sequence ID" value="CAL79056.1"/>
    <property type="molecule type" value="Genomic_DNA"/>
</dbReference>
<dbReference type="RefSeq" id="WP_012028987.1">
    <property type="nucleotide sequence ID" value="NC_009445.1"/>
</dbReference>
<dbReference type="SMR" id="A4YYT0"/>
<dbReference type="STRING" id="114615.BRADO5377"/>
<dbReference type="KEGG" id="bra:BRADO5377"/>
<dbReference type="eggNOG" id="COG2128">
    <property type="taxonomic scope" value="Bacteria"/>
</dbReference>
<dbReference type="HOGENOM" id="CLU_105328_0_0_5"/>
<dbReference type="OrthoDB" id="9801997at2"/>
<dbReference type="Proteomes" id="UP000001994">
    <property type="component" value="Chromosome"/>
</dbReference>
<dbReference type="GO" id="GO:0008785">
    <property type="term" value="F:alkyl hydroperoxide reductase activity"/>
    <property type="evidence" value="ECO:0007669"/>
    <property type="project" value="UniProtKB-UniRule"/>
</dbReference>
<dbReference type="GO" id="GO:0015036">
    <property type="term" value="F:disulfide oxidoreductase activity"/>
    <property type="evidence" value="ECO:0007669"/>
    <property type="project" value="TreeGrafter"/>
</dbReference>
<dbReference type="GO" id="GO:0032843">
    <property type="term" value="F:hydroperoxide reductase activity"/>
    <property type="evidence" value="ECO:0007669"/>
    <property type="project" value="InterPro"/>
</dbReference>
<dbReference type="GO" id="GO:0051920">
    <property type="term" value="F:peroxiredoxin activity"/>
    <property type="evidence" value="ECO:0007669"/>
    <property type="project" value="InterPro"/>
</dbReference>
<dbReference type="GO" id="GO:0045454">
    <property type="term" value="P:cell redox homeostasis"/>
    <property type="evidence" value="ECO:0007669"/>
    <property type="project" value="TreeGrafter"/>
</dbReference>
<dbReference type="GO" id="GO:0006979">
    <property type="term" value="P:response to oxidative stress"/>
    <property type="evidence" value="ECO:0007669"/>
    <property type="project" value="InterPro"/>
</dbReference>
<dbReference type="Gene3D" id="1.20.1290.10">
    <property type="entry name" value="AhpD-like"/>
    <property type="match status" value="1"/>
</dbReference>
<dbReference type="HAMAP" id="MF_01676">
    <property type="entry name" value="AhpD"/>
    <property type="match status" value="1"/>
</dbReference>
<dbReference type="InterPro" id="IPR004674">
    <property type="entry name" value="AhpD"/>
</dbReference>
<dbReference type="InterPro" id="IPR029032">
    <property type="entry name" value="AhpD-like"/>
</dbReference>
<dbReference type="InterPro" id="IPR004675">
    <property type="entry name" value="AhpD_core"/>
</dbReference>
<dbReference type="InterPro" id="IPR003779">
    <property type="entry name" value="CMD-like"/>
</dbReference>
<dbReference type="NCBIfam" id="TIGR00777">
    <property type="entry name" value="ahpD"/>
    <property type="match status" value="1"/>
</dbReference>
<dbReference type="NCBIfam" id="TIGR00778">
    <property type="entry name" value="ahpD_dom"/>
    <property type="match status" value="1"/>
</dbReference>
<dbReference type="PANTHER" id="PTHR33930">
    <property type="entry name" value="ALKYL HYDROPEROXIDE REDUCTASE AHPD"/>
    <property type="match status" value="1"/>
</dbReference>
<dbReference type="PANTHER" id="PTHR33930:SF7">
    <property type="entry name" value="ALKYL HYDROPEROXIDE REDUCTASE AHPD"/>
    <property type="match status" value="1"/>
</dbReference>
<dbReference type="Pfam" id="PF02627">
    <property type="entry name" value="CMD"/>
    <property type="match status" value="1"/>
</dbReference>
<dbReference type="SUPFAM" id="SSF69118">
    <property type="entry name" value="AhpD-like"/>
    <property type="match status" value="1"/>
</dbReference>
<name>AHPD_BRASO</name>
<gene>
    <name evidence="2" type="primary">ahpD</name>
    <name type="ordered locus">BRADO5377</name>
</gene>
<organism>
    <name type="scientific">Bradyrhizobium sp. (strain ORS 278)</name>
    <dbReference type="NCBI Taxonomy" id="114615"/>
    <lineage>
        <taxon>Bacteria</taxon>
        <taxon>Pseudomonadati</taxon>
        <taxon>Pseudomonadota</taxon>
        <taxon>Alphaproteobacteria</taxon>
        <taxon>Hyphomicrobiales</taxon>
        <taxon>Nitrobacteraceae</taxon>
        <taxon>Bradyrhizobium</taxon>
    </lineage>
</organism>
<reference key="1">
    <citation type="journal article" date="2007" name="Science">
        <title>Legumes symbioses: absence of nod genes in photosynthetic bradyrhizobia.</title>
        <authorList>
            <person name="Giraud E."/>
            <person name="Moulin L."/>
            <person name="Vallenet D."/>
            <person name="Barbe V."/>
            <person name="Cytryn E."/>
            <person name="Avarre J.-C."/>
            <person name="Jaubert M."/>
            <person name="Simon D."/>
            <person name="Cartieaux F."/>
            <person name="Prin Y."/>
            <person name="Bena G."/>
            <person name="Hannibal L."/>
            <person name="Fardoux J."/>
            <person name="Kojadinovic M."/>
            <person name="Vuillet L."/>
            <person name="Lajus A."/>
            <person name="Cruveiller S."/>
            <person name="Rouy Z."/>
            <person name="Mangenot S."/>
            <person name="Segurens B."/>
            <person name="Dossat C."/>
            <person name="Franck W.L."/>
            <person name="Chang W.-S."/>
            <person name="Saunders E."/>
            <person name="Bruce D."/>
            <person name="Richardson P."/>
            <person name="Normand P."/>
            <person name="Dreyfus B."/>
            <person name="Pignol D."/>
            <person name="Stacey G."/>
            <person name="Emerich D."/>
            <person name="Vermeglio A."/>
            <person name="Medigue C."/>
            <person name="Sadowsky M."/>
        </authorList>
    </citation>
    <scope>NUCLEOTIDE SEQUENCE [LARGE SCALE GENOMIC DNA]</scope>
    <source>
        <strain>ORS 278</strain>
    </source>
</reference>
<keyword id="KW-0049">Antioxidant</keyword>
<keyword id="KW-1015">Disulfide bond</keyword>
<keyword id="KW-0560">Oxidoreductase</keyword>
<keyword id="KW-0575">Peroxidase</keyword>
<keyword id="KW-0676">Redox-active center</keyword>
<keyword id="KW-1185">Reference proteome</keyword>
<protein>
    <recommendedName>
        <fullName evidence="2">Alkyl hydroperoxide reductase AhpD</fullName>
        <ecNumber evidence="2">1.11.1.28</ecNumber>
    </recommendedName>
    <alternativeName>
        <fullName evidence="2">Alkylhydroperoxidase AhpD</fullName>
    </alternativeName>
</protein>
<feature type="chain" id="PRO_0000359475" description="Alkyl hydroperoxide reductase AhpD">
    <location>
        <begin position="1"/>
        <end position="181"/>
    </location>
</feature>
<feature type="active site" description="Proton donor" evidence="2">
    <location>
        <position position="131"/>
    </location>
</feature>
<feature type="active site" description="Cysteine sulfenic acid (-SOH) intermediate" evidence="2">
    <location>
        <position position="134"/>
    </location>
</feature>
<feature type="disulfide bond" evidence="1">
    <location>
        <begin position="131"/>
        <end position="134"/>
    </location>
</feature>
<feature type="disulfide bond" description="Interchain (with AhpC); in linked form" evidence="2">
    <location>
        <position position="134"/>
    </location>
</feature>
<sequence>MSIEQLKDQIPDFAKDVRLNLSSMASDETLSPQAKYGLFVACAIATRNPMVMAAFEAVAAAQLSATALAAAKSAAAIMAMNNVYYRFVHLASNKEYATMPARLRMNVIANPGVDKADFELWSLAVSAINGCGTCIDAHEKVLQEAAVPAASIQTAVRFAAIIQSVAVAIEAAGVTVALAAE</sequence>
<comment type="function">
    <text evidence="2">Antioxidant protein with alkyl hydroperoxidase activity. Required for the reduction of the AhpC active site cysteine residues and for the regeneration of the AhpC enzyme activity.</text>
</comment>
<comment type="catalytic activity">
    <reaction evidence="2">
        <text>N(6)-[(R)-dihydrolipoyl]-L-lysyl-[lipoyl-carrier protein] + a hydroperoxide = N(6)-[(R)-lipoyl]-L-lysyl-[lipoyl-carrier protein] + an alcohol + H2O</text>
        <dbReference type="Rhea" id="RHEA:62636"/>
        <dbReference type="Rhea" id="RHEA-COMP:10502"/>
        <dbReference type="Rhea" id="RHEA-COMP:16355"/>
        <dbReference type="ChEBI" id="CHEBI:15377"/>
        <dbReference type="ChEBI" id="CHEBI:30879"/>
        <dbReference type="ChEBI" id="CHEBI:35924"/>
        <dbReference type="ChEBI" id="CHEBI:83099"/>
        <dbReference type="ChEBI" id="CHEBI:83100"/>
        <dbReference type="EC" id="1.11.1.28"/>
    </reaction>
</comment>
<comment type="similarity">
    <text evidence="2">Belongs to the AhpD family.</text>
</comment>
<accession>A4YYT0</accession>
<proteinExistence type="inferred from homology"/>
<evidence type="ECO:0000250" key="1"/>
<evidence type="ECO:0000255" key="2">
    <source>
        <dbReference type="HAMAP-Rule" id="MF_01676"/>
    </source>
</evidence>